<organism>
    <name type="scientific">Haemophilus influenzae (strain PittEE)</name>
    <dbReference type="NCBI Taxonomy" id="374930"/>
    <lineage>
        <taxon>Bacteria</taxon>
        <taxon>Pseudomonadati</taxon>
        <taxon>Pseudomonadota</taxon>
        <taxon>Gammaproteobacteria</taxon>
        <taxon>Pasteurellales</taxon>
        <taxon>Pasteurellaceae</taxon>
        <taxon>Haemophilus</taxon>
    </lineage>
</organism>
<comment type="function">
    <text evidence="1">One of several proteins that assist in the late maturation steps of the functional core of the 30S ribosomal subunit. Associates with free 30S ribosomal subunits (but not with 30S subunits that are part of 70S ribosomes or polysomes). Required for efficient processing of 16S rRNA. May interact with the 5'-terminal helix region of 16S rRNA.</text>
</comment>
<comment type="subunit">
    <text evidence="1">Monomer. Binds 30S ribosomal subunits, but not 50S ribosomal subunits or 70S ribosomes.</text>
</comment>
<comment type="subcellular location">
    <subcellularLocation>
        <location evidence="1">Cytoplasm</location>
    </subcellularLocation>
</comment>
<comment type="similarity">
    <text evidence="1">Belongs to the RbfA family.</text>
</comment>
<accession>A5UBU1</accession>
<sequence>MAREFKRSDRVAQEIQKEIAVILQREVKDPRIGMVTVSDVEVSSDLSYAKIFVTFLFDHDETAIEQGMKGLEKASPYIRSLLGKAMRLRIVPEIRFIYDQSLVEGMRMSNLVTNVVREDEKKHVEESN</sequence>
<feature type="chain" id="PRO_1000000116" description="Ribosome-binding factor A">
    <location>
        <begin position="1"/>
        <end position="128"/>
    </location>
</feature>
<name>RBFA_HAEIE</name>
<proteinExistence type="inferred from homology"/>
<reference key="1">
    <citation type="journal article" date="2007" name="Genome Biol.">
        <title>Characterization and modeling of the Haemophilus influenzae core and supragenomes based on the complete genomic sequences of Rd and 12 clinical nontypeable strains.</title>
        <authorList>
            <person name="Hogg J.S."/>
            <person name="Hu F.Z."/>
            <person name="Janto B."/>
            <person name="Boissy R."/>
            <person name="Hayes J."/>
            <person name="Keefe R."/>
            <person name="Post J.C."/>
            <person name="Ehrlich G.D."/>
        </authorList>
    </citation>
    <scope>NUCLEOTIDE SEQUENCE [LARGE SCALE GENOMIC DNA]</scope>
    <source>
        <strain>PittEE</strain>
    </source>
</reference>
<protein>
    <recommendedName>
        <fullName evidence="1">Ribosome-binding factor A</fullName>
    </recommendedName>
</protein>
<keyword id="KW-0963">Cytoplasm</keyword>
<keyword id="KW-0690">Ribosome biogenesis</keyword>
<gene>
    <name evidence="1" type="primary">rbfA</name>
    <name type="ordered locus">CGSHiEE_04185</name>
</gene>
<evidence type="ECO:0000255" key="1">
    <source>
        <dbReference type="HAMAP-Rule" id="MF_00003"/>
    </source>
</evidence>
<dbReference type="EMBL" id="CP000671">
    <property type="protein sequence ID" value="ABQ98242.1"/>
    <property type="molecule type" value="Genomic_DNA"/>
</dbReference>
<dbReference type="SMR" id="A5UBU1"/>
<dbReference type="KEGG" id="hip:CGSHiEE_04185"/>
<dbReference type="HOGENOM" id="CLU_089475_5_0_6"/>
<dbReference type="GO" id="GO:0005829">
    <property type="term" value="C:cytosol"/>
    <property type="evidence" value="ECO:0007669"/>
    <property type="project" value="TreeGrafter"/>
</dbReference>
<dbReference type="GO" id="GO:0043024">
    <property type="term" value="F:ribosomal small subunit binding"/>
    <property type="evidence" value="ECO:0007669"/>
    <property type="project" value="TreeGrafter"/>
</dbReference>
<dbReference type="GO" id="GO:0030490">
    <property type="term" value="P:maturation of SSU-rRNA"/>
    <property type="evidence" value="ECO:0007669"/>
    <property type="project" value="UniProtKB-UniRule"/>
</dbReference>
<dbReference type="FunFam" id="3.30.300.20:FF:000007">
    <property type="entry name" value="Ribosome-binding factor A"/>
    <property type="match status" value="1"/>
</dbReference>
<dbReference type="Gene3D" id="3.30.300.20">
    <property type="match status" value="1"/>
</dbReference>
<dbReference type="HAMAP" id="MF_00003">
    <property type="entry name" value="RbfA"/>
    <property type="match status" value="1"/>
</dbReference>
<dbReference type="InterPro" id="IPR015946">
    <property type="entry name" value="KH_dom-like_a/b"/>
</dbReference>
<dbReference type="InterPro" id="IPR000238">
    <property type="entry name" value="RbfA"/>
</dbReference>
<dbReference type="InterPro" id="IPR023799">
    <property type="entry name" value="RbfA_dom_sf"/>
</dbReference>
<dbReference type="InterPro" id="IPR020053">
    <property type="entry name" value="Ribosome-bd_factorA_CS"/>
</dbReference>
<dbReference type="NCBIfam" id="TIGR00082">
    <property type="entry name" value="rbfA"/>
    <property type="match status" value="1"/>
</dbReference>
<dbReference type="PANTHER" id="PTHR33515">
    <property type="entry name" value="RIBOSOME-BINDING FACTOR A, CHLOROPLASTIC-RELATED"/>
    <property type="match status" value="1"/>
</dbReference>
<dbReference type="PANTHER" id="PTHR33515:SF1">
    <property type="entry name" value="RIBOSOME-BINDING FACTOR A, CHLOROPLASTIC-RELATED"/>
    <property type="match status" value="1"/>
</dbReference>
<dbReference type="Pfam" id="PF02033">
    <property type="entry name" value="RBFA"/>
    <property type="match status" value="1"/>
</dbReference>
<dbReference type="SUPFAM" id="SSF89919">
    <property type="entry name" value="Ribosome-binding factor A, RbfA"/>
    <property type="match status" value="1"/>
</dbReference>
<dbReference type="PROSITE" id="PS01319">
    <property type="entry name" value="RBFA"/>
    <property type="match status" value="1"/>
</dbReference>